<accession>D3V3D1</accession>
<keyword id="KW-0997">Cell inner membrane</keyword>
<keyword id="KW-1003">Cell membrane</keyword>
<keyword id="KW-0472">Membrane</keyword>
<keyword id="KW-0571">Peptide transport</keyword>
<keyword id="KW-0653">Protein transport</keyword>
<keyword id="KW-0812">Transmembrane</keyword>
<keyword id="KW-1133">Transmembrane helix</keyword>
<keyword id="KW-0813">Transport</keyword>
<dbReference type="EMBL" id="FN667741">
    <property type="protein sequence ID" value="CBJ81246.1"/>
    <property type="molecule type" value="Genomic_DNA"/>
</dbReference>
<dbReference type="RefSeq" id="WP_012988570.1">
    <property type="nucleotide sequence ID" value="NC_013892.1"/>
</dbReference>
<dbReference type="SMR" id="D3V3D1"/>
<dbReference type="KEGG" id="xbo:XBJ1_2120"/>
<dbReference type="PATRIC" id="fig|406818.4.peg.1915"/>
<dbReference type="eggNOG" id="COG3104">
    <property type="taxonomic scope" value="Bacteria"/>
</dbReference>
<dbReference type="HOGENOM" id="CLU_004790_0_0_6"/>
<dbReference type="Proteomes" id="UP000002045">
    <property type="component" value="Chromosome"/>
</dbReference>
<dbReference type="GO" id="GO:0005886">
    <property type="term" value="C:plasma membrane"/>
    <property type="evidence" value="ECO:0007669"/>
    <property type="project" value="UniProtKB-SubCell"/>
</dbReference>
<dbReference type="GO" id="GO:0071916">
    <property type="term" value="F:dipeptide transmembrane transporter activity"/>
    <property type="evidence" value="ECO:0007669"/>
    <property type="project" value="UniProtKB-UniRule"/>
</dbReference>
<dbReference type="GO" id="GO:0015333">
    <property type="term" value="F:peptide:proton symporter activity"/>
    <property type="evidence" value="ECO:0007669"/>
    <property type="project" value="UniProtKB-UniRule"/>
</dbReference>
<dbReference type="GO" id="GO:0042937">
    <property type="term" value="F:tripeptide transmembrane transporter activity"/>
    <property type="evidence" value="ECO:0007669"/>
    <property type="project" value="UniProtKB-UniRule"/>
</dbReference>
<dbReference type="GO" id="GO:0015031">
    <property type="term" value="P:protein transport"/>
    <property type="evidence" value="ECO:0007669"/>
    <property type="project" value="UniProtKB-KW"/>
</dbReference>
<dbReference type="CDD" id="cd17346">
    <property type="entry name" value="MFS_DtpA_like"/>
    <property type="match status" value="1"/>
</dbReference>
<dbReference type="FunFam" id="1.20.1250.20:FF:000017">
    <property type="entry name" value="Dipeptide and tripeptide permease A"/>
    <property type="match status" value="1"/>
</dbReference>
<dbReference type="Gene3D" id="1.20.1250.20">
    <property type="entry name" value="MFS general substrate transporter like domains"/>
    <property type="match status" value="1"/>
</dbReference>
<dbReference type="HAMAP" id="MF_01879">
    <property type="entry name" value="PTR2_DtpB_subfam"/>
    <property type="match status" value="1"/>
</dbReference>
<dbReference type="InterPro" id="IPR023778">
    <property type="entry name" value="AA/pep_transptr_DtpB"/>
</dbReference>
<dbReference type="InterPro" id="IPR005279">
    <property type="entry name" value="Dipep/tripep_permease"/>
</dbReference>
<dbReference type="InterPro" id="IPR036259">
    <property type="entry name" value="MFS_trans_sf"/>
</dbReference>
<dbReference type="InterPro" id="IPR050171">
    <property type="entry name" value="MFS_Transporters"/>
</dbReference>
<dbReference type="InterPro" id="IPR000109">
    <property type="entry name" value="POT_fam"/>
</dbReference>
<dbReference type="InterPro" id="IPR018456">
    <property type="entry name" value="PTR2_symporter_CS"/>
</dbReference>
<dbReference type="NCBIfam" id="NF007575">
    <property type="entry name" value="PRK10207.1"/>
    <property type="match status" value="1"/>
</dbReference>
<dbReference type="NCBIfam" id="TIGR00924">
    <property type="entry name" value="yjdL_sub1_fam"/>
    <property type="match status" value="1"/>
</dbReference>
<dbReference type="PANTHER" id="PTHR23517:SF15">
    <property type="entry name" value="PROTON-DEPENDENT OLIGOPEPTIDE FAMILY TRANSPORT PROTEIN"/>
    <property type="match status" value="1"/>
</dbReference>
<dbReference type="PANTHER" id="PTHR23517">
    <property type="entry name" value="RESISTANCE PROTEIN MDTM, PUTATIVE-RELATED-RELATED"/>
    <property type="match status" value="1"/>
</dbReference>
<dbReference type="Pfam" id="PF00854">
    <property type="entry name" value="PTR2"/>
    <property type="match status" value="1"/>
</dbReference>
<dbReference type="SUPFAM" id="SSF103473">
    <property type="entry name" value="MFS general substrate transporter"/>
    <property type="match status" value="1"/>
</dbReference>
<dbReference type="PROSITE" id="PS01022">
    <property type="entry name" value="PTR2_1"/>
    <property type="match status" value="1"/>
</dbReference>
<dbReference type="PROSITE" id="PS01023">
    <property type="entry name" value="PTR2_2"/>
    <property type="match status" value="1"/>
</dbReference>
<proteinExistence type="inferred from homology"/>
<organism>
    <name type="scientific">Xenorhabdus bovienii (strain SS-2004)</name>
    <name type="common">Xenorhabdus nematophila subsp. bovienii</name>
    <dbReference type="NCBI Taxonomy" id="406818"/>
    <lineage>
        <taxon>Bacteria</taxon>
        <taxon>Pseudomonadati</taxon>
        <taxon>Pseudomonadota</taxon>
        <taxon>Gammaproteobacteria</taxon>
        <taxon>Enterobacterales</taxon>
        <taxon>Morganellaceae</taxon>
        <taxon>Xenorhabdus</taxon>
    </lineage>
</organism>
<gene>
    <name evidence="1" type="primary">dtpB</name>
    <name type="ordered locus">XBJ1_2120</name>
</gene>
<evidence type="ECO:0000255" key="1">
    <source>
        <dbReference type="HAMAP-Rule" id="MF_01879"/>
    </source>
</evidence>
<comment type="function">
    <text evidence="1">Proton-dependent permease that transports di- and tripeptides.</text>
</comment>
<comment type="subcellular location">
    <subcellularLocation>
        <location evidence="1">Cell inner membrane</location>
        <topology evidence="1">Multi-pass membrane protein</topology>
    </subcellularLocation>
</comment>
<comment type="similarity">
    <text evidence="1">Belongs to the major facilitator superfamily. Proton-dependent oligopeptide transporter (POT/PTR) (TC 2.A.17) family. DtpB subfamily.</text>
</comment>
<reference key="1">
    <citation type="journal article" date="2011" name="PLoS ONE">
        <title>The entomopathogenic bacterial endosymbionts xenorhabdus and photorhabdus: convergent lifestyles from divergent genomes.</title>
        <authorList>
            <person name="Chaston J.M."/>
            <person name="Suen G."/>
            <person name="Tucker S.L."/>
            <person name="Andersen A.W."/>
            <person name="Bhasin A."/>
            <person name="Bode E."/>
            <person name="Bode H.B."/>
            <person name="Brachmann A.O."/>
            <person name="Cowles C.E."/>
            <person name="Cowles K.N."/>
            <person name="Darby C."/>
            <person name="de Leon L."/>
            <person name="Drace K."/>
            <person name="Du Z."/>
            <person name="Givaudan A."/>
            <person name="Herbert Tran E.E."/>
            <person name="Jewell K.A."/>
            <person name="Knack J.J."/>
            <person name="Krasomil-Osterfeld K.C."/>
            <person name="Kukor R."/>
            <person name="Lanois A."/>
            <person name="Latreille P."/>
            <person name="Leimgruber N.K."/>
            <person name="Lipke C.M."/>
            <person name="Liu R."/>
            <person name="Lu X."/>
            <person name="Martens E.C."/>
            <person name="Marri P.R."/>
            <person name="Medigue C."/>
            <person name="Menard M.L."/>
            <person name="Miller N.M."/>
            <person name="Morales-Soto N."/>
            <person name="Norton S."/>
            <person name="Ogier J.C."/>
            <person name="Orchard S.S."/>
            <person name="Park D."/>
            <person name="Park Y."/>
            <person name="Qurollo B.A."/>
            <person name="Sugar D.R."/>
            <person name="Richards G.R."/>
            <person name="Rouy Z."/>
            <person name="Slominski B."/>
            <person name="Slominski K."/>
            <person name="Snyder H."/>
            <person name="Tjaden B.C."/>
            <person name="van der Hoeven R."/>
            <person name="Welch R.D."/>
            <person name="Wheeler C."/>
            <person name="Xiang B."/>
            <person name="Barbazuk B."/>
            <person name="Gaudriault S."/>
            <person name="Goodner B."/>
            <person name="Slater S.C."/>
            <person name="Forst S."/>
            <person name="Goldman B.S."/>
            <person name="Goodrich-Blair H."/>
        </authorList>
    </citation>
    <scope>NUCLEOTIDE SEQUENCE [LARGE SCALE GENOMIC DNA]</scope>
    <source>
        <strain>SS-2004</strain>
    </source>
</reference>
<name>DTPB_XENBS</name>
<sequence length="488" mass="53499">MSKTASVGLWDQPKPFFMIFFVELWERFGFYGVQGILAIYFVQQLGFSEEQSFITFGAFTALVYGLISVGGYVGDHILGTKRTIVLGAIVMAIGYYMIGLSIMKPELIFYALGTVAVGNGLFKANPASLLAKCYQPQDPRLDGAFTLFYMSINLGSLFSLSLAPVIAEKYGYTVTYNICGIGLIIALLVYIACRRMVHNIGSAPDHHPVKPIGLIAVLIGSVVMVGVCAWLLHNIKVANIALFAITTIVVLIFFWQAFKQNRVGRNKMFVAFILMLQAVVFFILYNQMPMSLNFFAINNVHHQILGFDVNPVSFQAFNPFWIIIVSPILAVVYTKLGAKGKDFSMPAKFTFGMFLCSLGFLTAAASGLFADAQGITSPWFIVLVYLFQSVGELMISALGLAMVAAFVPSYLTGFILGMWFLSQAVASMLASHVAALTATPVGVTDPLQTLPIYMSVFGKIGVATLIVAIIMTFMVPWLNRIMREEVKA</sequence>
<feature type="chain" id="PRO_0000395190" description="Dipeptide and tripeptide permease B">
    <location>
        <begin position="1"/>
        <end position="488"/>
    </location>
</feature>
<feature type="topological domain" description="Cytoplasmic" evidence="1">
    <location>
        <begin position="1"/>
        <end position="27"/>
    </location>
</feature>
<feature type="transmembrane region" description="Helical" evidence="1">
    <location>
        <begin position="28"/>
        <end position="48"/>
    </location>
</feature>
<feature type="topological domain" description="Periplasmic" evidence="1">
    <location>
        <begin position="49"/>
        <end position="52"/>
    </location>
</feature>
<feature type="transmembrane region" description="Helical" evidence="1">
    <location>
        <begin position="53"/>
        <end position="73"/>
    </location>
</feature>
<feature type="topological domain" description="Cytoplasmic" evidence="1">
    <location>
        <begin position="74"/>
        <end position="82"/>
    </location>
</feature>
<feature type="transmembrane region" description="Helical" evidence="1">
    <location>
        <begin position="83"/>
        <end position="103"/>
    </location>
</feature>
<feature type="topological domain" description="Periplasmic" evidence="1">
    <location>
        <begin position="104"/>
        <end position="106"/>
    </location>
</feature>
<feature type="transmembrane region" description="Helical" evidence="1">
    <location>
        <begin position="107"/>
        <end position="127"/>
    </location>
</feature>
<feature type="topological domain" description="Cytoplasmic" evidence="1">
    <location>
        <begin position="128"/>
        <end position="146"/>
    </location>
</feature>
<feature type="transmembrane region" description="Helical" evidence="1">
    <location>
        <begin position="147"/>
        <end position="167"/>
    </location>
</feature>
<feature type="topological domain" description="Periplasmic" evidence="1">
    <location>
        <begin position="168"/>
        <end position="172"/>
    </location>
</feature>
<feature type="transmembrane region" description="Helical" evidence="1">
    <location>
        <begin position="173"/>
        <end position="193"/>
    </location>
</feature>
<feature type="topological domain" description="Cytoplasmic" evidence="1">
    <location>
        <begin position="194"/>
        <end position="211"/>
    </location>
</feature>
<feature type="transmembrane region" description="Helical" evidence="1">
    <location>
        <begin position="212"/>
        <end position="232"/>
    </location>
</feature>
<feature type="topological domain" description="Periplasmic" evidence="1">
    <location>
        <begin position="233"/>
        <end position="234"/>
    </location>
</feature>
<feature type="transmembrane region" description="Helical" evidence="1">
    <location>
        <begin position="235"/>
        <end position="255"/>
    </location>
</feature>
<feature type="topological domain" description="Cytoplasmic" evidence="1">
    <location>
        <begin position="256"/>
        <end position="267"/>
    </location>
</feature>
<feature type="transmembrane region" description="Helical" evidence="1">
    <location>
        <begin position="268"/>
        <end position="288"/>
    </location>
</feature>
<feature type="topological domain" description="Periplasmic" evidence="1">
    <location>
        <begin position="289"/>
        <end position="311"/>
    </location>
</feature>
<feature type="transmembrane region" description="Helical" evidence="1">
    <location>
        <begin position="312"/>
        <end position="332"/>
    </location>
</feature>
<feature type="topological domain" description="Cytoplasmic" evidence="1">
    <location>
        <begin position="333"/>
        <end position="348"/>
    </location>
</feature>
<feature type="transmembrane region" description="Helical" evidence="1">
    <location>
        <begin position="349"/>
        <end position="369"/>
    </location>
</feature>
<feature type="topological domain" description="Periplasmic" evidence="1">
    <location>
        <begin position="370"/>
        <end position="378"/>
    </location>
</feature>
<feature type="transmembrane region" description="Helical" evidence="1">
    <location>
        <begin position="379"/>
        <end position="399"/>
    </location>
</feature>
<feature type="topological domain" description="Cytoplasmic" evidence="1">
    <location>
        <begin position="400"/>
        <end position="423"/>
    </location>
</feature>
<feature type="transmembrane region" description="Helical" evidence="1">
    <location>
        <begin position="424"/>
        <end position="444"/>
    </location>
</feature>
<feature type="topological domain" description="Periplasmic" evidence="1">
    <location>
        <begin position="445"/>
        <end position="455"/>
    </location>
</feature>
<feature type="transmembrane region" description="Helical" evidence="1">
    <location>
        <begin position="456"/>
        <end position="476"/>
    </location>
</feature>
<feature type="topological domain" description="Cytoplasmic" evidence="1">
    <location>
        <begin position="477"/>
        <end position="488"/>
    </location>
</feature>
<protein>
    <recommendedName>
        <fullName evidence="1">Dipeptide and tripeptide permease B</fullName>
    </recommendedName>
</protein>